<evidence type="ECO:0000250" key="1"/>
<evidence type="ECO:0000255" key="2">
    <source>
        <dbReference type="PROSITE-ProRule" id="PRU00599"/>
    </source>
</evidence>
<evidence type="ECO:0000305" key="3"/>
<reference key="1">
    <citation type="journal article" date="2000" name="Gene">
        <title>Two closely related cDNAs encoding actin-depolymerizing factors of petunia are mainly expressed in vegetative tissues.</title>
        <authorList>
            <person name="Mun J.-H."/>
            <person name="Yu H.-J."/>
            <person name="Lee H.S."/>
            <person name="Kwon Y.M."/>
            <person name="Lee J.S."/>
            <person name="Lee I."/>
            <person name="Kim S.-G."/>
        </authorList>
    </citation>
    <scope>NUCLEOTIDE SEQUENCE [MRNA]</scope>
</reference>
<keyword id="KW-0009">Actin-binding</keyword>
<protein>
    <recommendedName>
        <fullName>Actin-depolymerizing factor 2</fullName>
        <shortName>ADF-2</shortName>
    </recommendedName>
</protein>
<feature type="chain" id="PRO_0000214936" description="Actin-depolymerizing factor 2">
    <location>
        <begin position="1"/>
        <end position="143"/>
    </location>
</feature>
<feature type="domain" description="ADF-H" evidence="2">
    <location>
        <begin position="5"/>
        <end position="139"/>
    </location>
</feature>
<proteinExistence type="evidence at transcript level"/>
<accession>Q9FVI1</accession>
<gene>
    <name type="primary">ADF2</name>
</gene>
<name>ADF2_PETHY</name>
<sequence>MANAASGMAVHDDCKLKFLELKAKRTYRFIIYKIEEKQKEVVVEKLGEPTESYEDFTAGLPADECRYAVYDFDFMTKENHQKSRIFFIAWSPDTARVRSKMIYASSKDRFKRELDGIQVELQATDPTEMGLDVFRSRAGGIEC</sequence>
<dbReference type="EMBL" id="AF183904">
    <property type="protein sequence ID" value="AAG16974.1"/>
    <property type="molecule type" value="mRNA"/>
</dbReference>
<dbReference type="SMR" id="Q9FVI1"/>
<dbReference type="GO" id="GO:0015629">
    <property type="term" value="C:actin cytoskeleton"/>
    <property type="evidence" value="ECO:0007669"/>
    <property type="project" value="InterPro"/>
</dbReference>
<dbReference type="GO" id="GO:0003779">
    <property type="term" value="F:actin binding"/>
    <property type="evidence" value="ECO:0007669"/>
    <property type="project" value="UniProtKB-KW"/>
</dbReference>
<dbReference type="GO" id="GO:0030042">
    <property type="term" value="P:actin filament depolymerization"/>
    <property type="evidence" value="ECO:0007669"/>
    <property type="project" value="InterPro"/>
</dbReference>
<dbReference type="CDD" id="cd11286">
    <property type="entry name" value="ADF_cofilin_like"/>
    <property type="match status" value="1"/>
</dbReference>
<dbReference type="FunFam" id="3.40.20.10:FF:000025">
    <property type="entry name" value="Actin-depolymerizing factor 2"/>
    <property type="match status" value="1"/>
</dbReference>
<dbReference type="Gene3D" id="3.40.20.10">
    <property type="entry name" value="Severin"/>
    <property type="match status" value="1"/>
</dbReference>
<dbReference type="InterPro" id="IPR002108">
    <property type="entry name" value="ADF-H"/>
</dbReference>
<dbReference type="InterPro" id="IPR029006">
    <property type="entry name" value="ADF-H/Gelsolin-like_dom_sf"/>
</dbReference>
<dbReference type="InterPro" id="IPR017904">
    <property type="entry name" value="ADF/Cofilin"/>
</dbReference>
<dbReference type="PANTHER" id="PTHR11913">
    <property type="entry name" value="COFILIN-RELATED"/>
    <property type="match status" value="1"/>
</dbReference>
<dbReference type="Pfam" id="PF00241">
    <property type="entry name" value="Cofilin_ADF"/>
    <property type="match status" value="1"/>
</dbReference>
<dbReference type="SMART" id="SM00102">
    <property type="entry name" value="ADF"/>
    <property type="match status" value="1"/>
</dbReference>
<dbReference type="SUPFAM" id="SSF55753">
    <property type="entry name" value="Actin depolymerizing proteins"/>
    <property type="match status" value="1"/>
</dbReference>
<dbReference type="PROSITE" id="PS51263">
    <property type="entry name" value="ADF_H"/>
    <property type="match status" value="1"/>
</dbReference>
<organism>
    <name type="scientific">Petunia hybrida</name>
    <name type="common">Petunia</name>
    <dbReference type="NCBI Taxonomy" id="4102"/>
    <lineage>
        <taxon>Eukaryota</taxon>
        <taxon>Viridiplantae</taxon>
        <taxon>Streptophyta</taxon>
        <taxon>Embryophyta</taxon>
        <taxon>Tracheophyta</taxon>
        <taxon>Spermatophyta</taxon>
        <taxon>Magnoliopsida</taxon>
        <taxon>eudicotyledons</taxon>
        <taxon>Gunneridae</taxon>
        <taxon>Pentapetalae</taxon>
        <taxon>asterids</taxon>
        <taxon>lamiids</taxon>
        <taxon>Solanales</taxon>
        <taxon>Solanaceae</taxon>
        <taxon>Petunioideae</taxon>
        <taxon>Petunia</taxon>
    </lineage>
</organism>
<comment type="function">
    <text evidence="1">Actin-depolymerizing protein. Severs actin filaments (F-actin) and binds to actin monomers (By similarity).</text>
</comment>
<comment type="similarity">
    <text evidence="3">Belongs to the actin-binding proteins ADF family.</text>
</comment>